<reference key="1">
    <citation type="journal article" date="2005" name="Nucleic Acids Res.">
        <title>Genomic blueprint of Hahella chejuensis, a marine microbe producing an algicidal agent.</title>
        <authorList>
            <person name="Jeong H."/>
            <person name="Yim J.H."/>
            <person name="Lee C."/>
            <person name="Choi S.-H."/>
            <person name="Park Y.K."/>
            <person name="Yoon S.H."/>
            <person name="Hur C.-G."/>
            <person name="Kang H.-Y."/>
            <person name="Kim D."/>
            <person name="Lee H.H."/>
            <person name="Park K.H."/>
            <person name="Park S.-H."/>
            <person name="Park H.-S."/>
            <person name="Lee H.K."/>
            <person name="Oh T.K."/>
            <person name="Kim J.F."/>
        </authorList>
    </citation>
    <scope>NUCLEOTIDE SEQUENCE [LARGE SCALE GENOMIC DNA]</scope>
    <source>
        <strain>KCTC 2396</strain>
    </source>
</reference>
<organism>
    <name type="scientific">Hahella chejuensis (strain KCTC 2396)</name>
    <dbReference type="NCBI Taxonomy" id="349521"/>
    <lineage>
        <taxon>Bacteria</taxon>
        <taxon>Pseudomonadati</taxon>
        <taxon>Pseudomonadota</taxon>
        <taxon>Gammaproteobacteria</taxon>
        <taxon>Oceanospirillales</taxon>
        <taxon>Hahellaceae</taxon>
        <taxon>Hahella</taxon>
    </lineage>
</organism>
<proteinExistence type="inferred from homology"/>
<dbReference type="EC" id="2.8.1.-" evidence="1"/>
<dbReference type="EMBL" id="CP000155">
    <property type="protein sequence ID" value="ABC29002.1"/>
    <property type="molecule type" value="Genomic_DNA"/>
</dbReference>
<dbReference type="RefSeq" id="WP_011396072.1">
    <property type="nucleotide sequence ID" value="NC_007645.1"/>
</dbReference>
<dbReference type="SMR" id="Q2SK22"/>
<dbReference type="STRING" id="349521.HCH_02174"/>
<dbReference type="KEGG" id="hch:HCH_02174"/>
<dbReference type="eggNOG" id="COG0037">
    <property type="taxonomic scope" value="Bacteria"/>
</dbReference>
<dbReference type="HOGENOM" id="CLU_026481_0_0_6"/>
<dbReference type="OrthoDB" id="9801054at2"/>
<dbReference type="Proteomes" id="UP000000238">
    <property type="component" value="Chromosome"/>
</dbReference>
<dbReference type="GO" id="GO:0005737">
    <property type="term" value="C:cytoplasm"/>
    <property type="evidence" value="ECO:0007669"/>
    <property type="project" value="UniProtKB-SubCell"/>
</dbReference>
<dbReference type="GO" id="GO:0051539">
    <property type="term" value="F:4 iron, 4 sulfur cluster binding"/>
    <property type="evidence" value="ECO:0007669"/>
    <property type="project" value="UniProtKB-UniRule"/>
</dbReference>
<dbReference type="GO" id="GO:0005524">
    <property type="term" value="F:ATP binding"/>
    <property type="evidence" value="ECO:0007669"/>
    <property type="project" value="UniProtKB-UniRule"/>
</dbReference>
<dbReference type="GO" id="GO:0000287">
    <property type="term" value="F:magnesium ion binding"/>
    <property type="evidence" value="ECO:0007669"/>
    <property type="project" value="UniProtKB-UniRule"/>
</dbReference>
<dbReference type="GO" id="GO:0016783">
    <property type="term" value="F:sulfurtransferase activity"/>
    <property type="evidence" value="ECO:0007669"/>
    <property type="project" value="UniProtKB-UniRule"/>
</dbReference>
<dbReference type="GO" id="GO:0000049">
    <property type="term" value="F:tRNA binding"/>
    <property type="evidence" value="ECO:0007669"/>
    <property type="project" value="UniProtKB-KW"/>
</dbReference>
<dbReference type="GO" id="GO:0034227">
    <property type="term" value="P:tRNA thio-modification"/>
    <property type="evidence" value="ECO:0007669"/>
    <property type="project" value="UniProtKB-UniRule"/>
</dbReference>
<dbReference type="CDD" id="cd24138">
    <property type="entry name" value="TtcA-like"/>
    <property type="match status" value="1"/>
</dbReference>
<dbReference type="Gene3D" id="3.40.50.620">
    <property type="entry name" value="HUPs"/>
    <property type="match status" value="1"/>
</dbReference>
<dbReference type="HAMAP" id="MF_01850">
    <property type="entry name" value="TtcA"/>
    <property type="match status" value="1"/>
</dbReference>
<dbReference type="InterPro" id="IPR014729">
    <property type="entry name" value="Rossmann-like_a/b/a_fold"/>
</dbReference>
<dbReference type="InterPro" id="IPR011063">
    <property type="entry name" value="TilS/TtcA_N"/>
</dbReference>
<dbReference type="InterPro" id="IPR012089">
    <property type="entry name" value="tRNA_Cyd_32_2_STrfase"/>
</dbReference>
<dbReference type="InterPro" id="IPR035107">
    <property type="entry name" value="tRNA_thiolation_TtcA_Ctu1"/>
</dbReference>
<dbReference type="NCBIfam" id="NF007972">
    <property type="entry name" value="PRK10696.1"/>
    <property type="match status" value="1"/>
</dbReference>
<dbReference type="PANTHER" id="PTHR43686:SF1">
    <property type="entry name" value="AMINOTRAN_5 DOMAIN-CONTAINING PROTEIN"/>
    <property type="match status" value="1"/>
</dbReference>
<dbReference type="PANTHER" id="PTHR43686">
    <property type="entry name" value="SULFURTRANSFERASE-RELATED"/>
    <property type="match status" value="1"/>
</dbReference>
<dbReference type="Pfam" id="PF01171">
    <property type="entry name" value="ATP_bind_3"/>
    <property type="match status" value="1"/>
</dbReference>
<dbReference type="PIRSF" id="PIRSF004976">
    <property type="entry name" value="ATPase_YdaO"/>
    <property type="match status" value="1"/>
</dbReference>
<dbReference type="SUPFAM" id="SSF52402">
    <property type="entry name" value="Adenine nucleotide alpha hydrolases-like"/>
    <property type="match status" value="1"/>
</dbReference>
<sequence>MTAAFKSEMAQRDRLELNKLRKLLRREVGRAIADFNMIEDGDKVMCCLSGGKDSYAMLDILLNLKKHAPISFEVIAVNLDQKQPGFPEHVLPEYLSSLGVEYYVIERDTYSIVKDKIPEGKTTCGLCSRLRRGILYDFAVEHKCTKIALGHHRDDIMETLFLNMFYGGKMRAMPPKLKSDDGRNIVIRPLAYCREKDIERYAGLREFPIIPCNLCGSQENLQRQNIKMMLQDWDKRFPGRLENMFRAVQNVLPSHLCDTRLYDFDKLERYSMEPEEFNQISVLNL</sequence>
<protein>
    <recommendedName>
        <fullName evidence="1">tRNA-cytidine(32) 2-sulfurtransferase</fullName>
        <ecNumber evidence="1">2.8.1.-</ecNumber>
    </recommendedName>
    <alternativeName>
        <fullName evidence="1">Two-thiocytidine biosynthesis protein A</fullName>
    </alternativeName>
    <alternativeName>
        <fullName evidence="1">tRNA 2-thiocytidine biosynthesis protein TtcA</fullName>
    </alternativeName>
</protein>
<evidence type="ECO:0000255" key="1">
    <source>
        <dbReference type="HAMAP-Rule" id="MF_01850"/>
    </source>
</evidence>
<feature type="chain" id="PRO_0000348752" description="tRNA-cytidine(32) 2-sulfurtransferase">
    <location>
        <begin position="1"/>
        <end position="285"/>
    </location>
</feature>
<feature type="short sequence motif" description="PP-loop motif" evidence="1">
    <location>
        <begin position="49"/>
        <end position="54"/>
    </location>
</feature>
<feature type="binding site" evidence="1">
    <location>
        <position position="124"/>
    </location>
    <ligand>
        <name>[4Fe-4S] cluster</name>
        <dbReference type="ChEBI" id="CHEBI:49883"/>
    </ligand>
</feature>
<feature type="binding site" evidence="1">
    <location>
        <position position="127"/>
    </location>
    <ligand>
        <name>[4Fe-4S] cluster</name>
        <dbReference type="ChEBI" id="CHEBI:49883"/>
    </ligand>
</feature>
<feature type="binding site" evidence="1">
    <location>
        <position position="215"/>
    </location>
    <ligand>
        <name>[4Fe-4S] cluster</name>
        <dbReference type="ChEBI" id="CHEBI:49883"/>
    </ligand>
</feature>
<comment type="function">
    <text evidence="1">Catalyzes the ATP-dependent 2-thiolation of cytidine in position 32 of tRNA, to form 2-thiocytidine (s(2)C32). The sulfur atoms are provided by the cysteine/cysteine desulfurase (IscS) system.</text>
</comment>
<comment type="catalytic activity">
    <reaction evidence="1">
        <text>cytidine(32) in tRNA + S-sulfanyl-L-cysteinyl-[cysteine desulfurase] + AH2 + ATP = 2-thiocytidine(32) in tRNA + L-cysteinyl-[cysteine desulfurase] + A + AMP + diphosphate + H(+)</text>
        <dbReference type="Rhea" id="RHEA:57048"/>
        <dbReference type="Rhea" id="RHEA-COMP:10288"/>
        <dbReference type="Rhea" id="RHEA-COMP:12157"/>
        <dbReference type="Rhea" id="RHEA-COMP:12158"/>
        <dbReference type="Rhea" id="RHEA-COMP:14821"/>
        <dbReference type="ChEBI" id="CHEBI:13193"/>
        <dbReference type="ChEBI" id="CHEBI:15378"/>
        <dbReference type="ChEBI" id="CHEBI:17499"/>
        <dbReference type="ChEBI" id="CHEBI:29950"/>
        <dbReference type="ChEBI" id="CHEBI:30616"/>
        <dbReference type="ChEBI" id="CHEBI:33019"/>
        <dbReference type="ChEBI" id="CHEBI:61963"/>
        <dbReference type="ChEBI" id="CHEBI:82748"/>
        <dbReference type="ChEBI" id="CHEBI:141453"/>
        <dbReference type="ChEBI" id="CHEBI:456215"/>
    </reaction>
    <physiologicalReaction direction="left-to-right" evidence="1">
        <dbReference type="Rhea" id="RHEA:57049"/>
    </physiologicalReaction>
</comment>
<comment type="cofactor">
    <cofactor evidence="1">
        <name>Mg(2+)</name>
        <dbReference type="ChEBI" id="CHEBI:18420"/>
    </cofactor>
</comment>
<comment type="cofactor">
    <cofactor evidence="1">
        <name>[4Fe-4S] cluster</name>
        <dbReference type="ChEBI" id="CHEBI:49883"/>
    </cofactor>
    <text evidence="1">Binds 1 [4Fe-4S] cluster per subunit. The cluster is chelated by three Cys residues, the fourth Fe has a free coordination site that may bind a sulfur atom transferred from the persulfide of IscS.</text>
</comment>
<comment type="pathway">
    <text evidence="1">tRNA modification.</text>
</comment>
<comment type="subunit">
    <text evidence="1">Homodimer.</text>
</comment>
<comment type="subcellular location">
    <subcellularLocation>
        <location evidence="1">Cytoplasm</location>
    </subcellularLocation>
</comment>
<comment type="miscellaneous">
    <text evidence="1">The thiolation reaction likely consists of two steps: a first activation step by ATP to form an adenylated intermediate of the target base of tRNA, and a second nucleophilic substitution step of the sulfur (S) atom supplied by the hydrosulfide attached to the Fe-S cluster.</text>
</comment>
<comment type="similarity">
    <text evidence="1">Belongs to the TtcA family.</text>
</comment>
<accession>Q2SK22</accession>
<gene>
    <name evidence="1" type="primary">ttcA</name>
    <name type="ordered locus">HCH_02174</name>
</gene>
<keyword id="KW-0004">4Fe-4S</keyword>
<keyword id="KW-0067">ATP-binding</keyword>
<keyword id="KW-0963">Cytoplasm</keyword>
<keyword id="KW-0408">Iron</keyword>
<keyword id="KW-0411">Iron-sulfur</keyword>
<keyword id="KW-0460">Magnesium</keyword>
<keyword id="KW-0479">Metal-binding</keyword>
<keyword id="KW-0547">Nucleotide-binding</keyword>
<keyword id="KW-1185">Reference proteome</keyword>
<keyword id="KW-0694">RNA-binding</keyword>
<keyword id="KW-0808">Transferase</keyword>
<keyword id="KW-0819">tRNA processing</keyword>
<keyword id="KW-0820">tRNA-binding</keyword>
<name>TTCA_HAHCH</name>